<evidence type="ECO:0000255" key="1">
    <source>
        <dbReference type="HAMAP-Rule" id="MF_04053"/>
    </source>
</evidence>
<evidence type="ECO:0000256" key="2">
    <source>
        <dbReference type="SAM" id="MobiDB-lite"/>
    </source>
</evidence>
<evidence type="ECO:0000305" key="3"/>
<organismHost>
    <name type="scientific">Homo sapiens</name>
    <name type="common">Human</name>
    <dbReference type="NCBI Taxonomy" id="9606"/>
</organismHost>
<proteinExistence type="inferred from homology"/>
<accession>P36717</accession>
<sequence length="347" mass="39370">MPSMTKRKFKEELLQALAPEIYGPSDNLTKRDIKHVKKREKKEEEVAAASADGVEFVRSFAPRRRVQWKGRQVKRILRPGTTVVFSPGERTIMRPLKREYDEVYADDDILEQAAQQTGEFAYGKKGRYGDKIAIPLDEGNPTPSLKAVTLQQVLPVLGPSEEKRGIKREAMDELQPTMQLMVPKRQKLEDVLEHMKVDPSVQPDVKVRPIKKVAPGLGVQTVDIQIPVQTALGETMEIQTSPIKTTVNASVQTDPWYPPVLSTKKKRHYRQTSSLLPDYVLHPSIVPTPGYRGTTFQRRATAPSRRRGPSRRRRRRKATLAPAAVRRVVQRGRTLILPSVRYHPSIL</sequence>
<protein>
    <recommendedName>
        <fullName evidence="1">Core-capsid bridging protein</fullName>
    </recommendedName>
    <alternativeName>
        <fullName evidence="1">Core protein V</fullName>
    </alternativeName>
</protein>
<comment type="function">
    <text evidence="1">Associates loosely with the viral DNA to form an outer shell around the nucleoprotein-DNA complex and links it with the capsid by binding the endosome lysis protein. Dissociates from the viral genome during entry. Might be involved in nuclear capsid assembly of the viral particles through its association with NPM1/nucleophosmin.</text>
</comment>
<comment type="subunit">
    <text evidence="1">Monomer. Homodimer. Exists in equilibrium between monomers and dimers in solution. Interacts with the histone-like nucleoprotein; this interactions bridge the virus core to the capsid. Interacts with core protein X; this interactions bridge the virus core to the capsid. Interacts with the endosome lysis protein VI; this interactions bridge the virus core to the capsid. Interacts with the peripentonal hexons. Interacts with host NPM1; this interaction might play a role in virus assembly.</text>
</comment>
<comment type="subcellular location">
    <subcellularLocation>
        <location evidence="1">Virion</location>
    </subcellularLocation>
    <subcellularLocation>
        <location evidence="1">Host nucleus</location>
        <location evidence="1">Host nucleolus</location>
    </subcellularLocation>
    <text evidence="1">Located inside the capsid (core). Present in 157 copies per virion. Localizes in the nucleoli during infection, then translocates from the nucleoli to the nucleoplasm as the infection progresses and is finally incorporated into the viral particles.</text>
</comment>
<comment type="induction">
    <text evidence="1">Expressed in the late phase of the viral replicative cycle.</text>
</comment>
<comment type="miscellaneous">
    <text evidence="1">All late proteins expressed from the major late promoter are produced by alternative splicing and alternative polyadenylation of the same gene giving rise to non-overlapping ORFs. A leader sequence is present in the N-terminus of all these mRNAs and is recognized by the viral shutoff protein to provide expression although conventional translation via ribosome scanning from the cap has been shut off in the host cell.</text>
</comment>
<comment type="miscellaneous">
    <text evidence="1">This protein is only encoded by mastadenoviruses, and may therefore play a role in mammals tropism.</text>
</comment>
<comment type="similarity">
    <text evidence="1 3">Belongs to the adenoviridae core-capsid bridging protein family.</text>
</comment>
<feature type="chain" id="PRO_0000221905" description="Core-capsid bridging protein">
    <location>
        <begin position="1"/>
        <end position="347"/>
    </location>
</feature>
<feature type="region of interest" description="Disordered" evidence="2">
    <location>
        <begin position="290"/>
        <end position="320"/>
    </location>
</feature>
<feature type="compositionally biased region" description="Basic residues" evidence="2">
    <location>
        <begin position="304"/>
        <end position="318"/>
    </location>
</feature>
<dbReference type="EMBL" id="X73487">
    <property type="protein sequence ID" value="CAA51888.1"/>
    <property type="molecule type" value="Genomic_DNA"/>
</dbReference>
<dbReference type="PIR" id="S33939">
    <property type="entry name" value="S33939"/>
</dbReference>
<dbReference type="Proteomes" id="UP000004993">
    <property type="component" value="Genome"/>
</dbReference>
<dbReference type="GO" id="GO:0044196">
    <property type="term" value="C:host cell nucleolus"/>
    <property type="evidence" value="ECO:0007669"/>
    <property type="project" value="UniProtKB-SubCell"/>
</dbReference>
<dbReference type="GO" id="GO:0044423">
    <property type="term" value="C:virion component"/>
    <property type="evidence" value="ECO:0007669"/>
    <property type="project" value="UniProtKB-UniRule"/>
</dbReference>
<dbReference type="GO" id="GO:0003677">
    <property type="term" value="F:DNA binding"/>
    <property type="evidence" value="ECO:0007669"/>
    <property type="project" value="UniProtKB-UniRule"/>
</dbReference>
<dbReference type="GO" id="GO:0019076">
    <property type="term" value="P:viral release from host cell"/>
    <property type="evidence" value="ECO:0007669"/>
    <property type="project" value="UniProtKB-UniRule"/>
</dbReference>
<dbReference type="HAMAP" id="MF_04053">
    <property type="entry name" value="ADV_CORE5"/>
    <property type="match status" value="1"/>
</dbReference>
<dbReference type="InterPro" id="IPR005608">
    <property type="entry name" value="Adeno_V"/>
</dbReference>
<dbReference type="Pfam" id="PF03910">
    <property type="entry name" value="Adeno_PV"/>
    <property type="match status" value="1"/>
</dbReference>
<gene>
    <name evidence="1" type="primary">L2</name>
</gene>
<reference key="1">
    <citation type="journal article" date="1994" name="J. Virol.">
        <title>Nucleotide sequence of human adenovirus type 12 DNA: comparative functional analysis.</title>
        <authorList>
            <person name="Sprengel J."/>
            <person name="Schmitz B."/>
            <person name="Heuss-Neitzel D."/>
            <person name="Zock C."/>
            <person name="Doerfler W."/>
        </authorList>
    </citation>
    <scope>NUCLEOTIDE SEQUENCE [LARGE SCALE GENOMIC DNA]</scope>
</reference>
<organism>
    <name type="scientific">Human adenovirus A serotype 12</name>
    <name type="common">HAdV-12</name>
    <name type="synonym">Human adenovirus 12</name>
    <dbReference type="NCBI Taxonomy" id="28282"/>
    <lineage>
        <taxon>Viruses</taxon>
        <taxon>Varidnaviria</taxon>
        <taxon>Bamfordvirae</taxon>
        <taxon>Preplasmiviricota</taxon>
        <taxon>Tectiliviricetes</taxon>
        <taxon>Rowavirales</taxon>
        <taxon>Adenoviridae</taxon>
        <taxon>Mastadenovirus</taxon>
        <taxon>Human mastadenovirus A</taxon>
    </lineage>
</organism>
<name>CORE5_ADE12</name>
<keyword id="KW-0238">DNA-binding</keyword>
<keyword id="KW-1048">Host nucleus</keyword>
<keyword id="KW-0426">Late protein</keyword>
<keyword id="KW-1185">Reference proteome</keyword>
<keyword id="KW-0118">Viral capsid assembly</keyword>
<keyword id="KW-1188">Viral release from host cell</keyword>
<keyword id="KW-0946">Virion</keyword>